<dbReference type="EMBL" id="CP000923">
    <property type="protein sequence ID" value="ABY92195.1"/>
    <property type="molecule type" value="Genomic_DNA"/>
</dbReference>
<dbReference type="RefSeq" id="WP_003868585.1">
    <property type="nucleotide sequence ID" value="NC_010320.1"/>
</dbReference>
<dbReference type="SMR" id="B0K5R9"/>
<dbReference type="KEGG" id="tex:Teth514_0893"/>
<dbReference type="HOGENOM" id="CLU_072439_5_0_9"/>
<dbReference type="Proteomes" id="UP000002155">
    <property type="component" value="Chromosome"/>
</dbReference>
<dbReference type="GO" id="GO:1990904">
    <property type="term" value="C:ribonucleoprotein complex"/>
    <property type="evidence" value="ECO:0007669"/>
    <property type="project" value="UniProtKB-KW"/>
</dbReference>
<dbReference type="GO" id="GO:0005840">
    <property type="term" value="C:ribosome"/>
    <property type="evidence" value="ECO:0007669"/>
    <property type="project" value="UniProtKB-KW"/>
</dbReference>
<dbReference type="GO" id="GO:0019843">
    <property type="term" value="F:rRNA binding"/>
    <property type="evidence" value="ECO:0007669"/>
    <property type="project" value="UniProtKB-UniRule"/>
</dbReference>
<dbReference type="GO" id="GO:0003735">
    <property type="term" value="F:structural constituent of ribosome"/>
    <property type="evidence" value="ECO:0007669"/>
    <property type="project" value="InterPro"/>
</dbReference>
<dbReference type="GO" id="GO:0006412">
    <property type="term" value="P:translation"/>
    <property type="evidence" value="ECO:0007669"/>
    <property type="project" value="UniProtKB-UniRule"/>
</dbReference>
<dbReference type="FunFam" id="3.30.420.80:FF:000001">
    <property type="entry name" value="30S ribosomal protein S11"/>
    <property type="match status" value="1"/>
</dbReference>
<dbReference type="Gene3D" id="3.30.420.80">
    <property type="entry name" value="Ribosomal protein S11"/>
    <property type="match status" value="1"/>
</dbReference>
<dbReference type="HAMAP" id="MF_01310">
    <property type="entry name" value="Ribosomal_uS11"/>
    <property type="match status" value="1"/>
</dbReference>
<dbReference type="InterPro" id="IPR001971">
    <property type="entry name" value="Ribosomal_uS11"/>
</dbReference>
<dbReference type="InterPro" id="IPR019981">
    <property type="entry name" value="Ribosomal_uS11_bac-type"/>
</dbReference>
<dbReference type="InterPro" id="IPR018102">
    <property type="entry name" value="Ribosomal_uS11_CS"/>
</dbReference>
<dbReference type="InterPro" id="IPR036967">
    <property type="entry name" value="Ribosomal_uS11_sf"/>
</dbReference>
<dbReference type="NCBIfam" id="NF003698">
    <property type="entry name" value="PRK05309.1"/>
    <property type="match status" value="1"/>
</dbReference>
<dbReference type="NCBIfam" id="TIGR03632">
    <property type="entry name" value="uS11_bact"/>
    <property type="match status" value="1"/>
</dbReference>
<dbReference type="PANTHER" id="PTHR11759">
    <property type="entry name" value="40S RIBOSOMAL PROTEIN S14/30S RIBOSOMAL PROTEIN S11"/>
    <property type="match status" value="1"/>
</dbReference>
<dbReference type="Pfam" id="PF00411">
    <property type="entry name" value="Ribosomal_S11"/>
    <property type="match status" value="1"/>
</dbReference>
<dbReference type="PIRSF" id="PIRSF002131">
    <property type="entry name" value="Ribosomal_S11"/>
    <property type="match status" value="1"/>
</dbReference>
<dbReference type="SUPFAM" id="SSF53137">
    <property type="entry name" value="Translational machinery components"/>
    <property type="match status" value="1"/>
</dbReference>
<dbReference type="PROSITE" id="PS00054">
    <property type="entry name" value="RIBOSOMAL_S11"/>
    <property type="match status" value="1"/>
</dbReference>
<accession>B0K5R9</accession>
<organism>
    <name type="scientific">Thermoanaerobacter sp. (strain X514)</name>
    <dbReference type="NCBI Taxonomy" id="399726"/>
    <lineage>
        <taxon>Bacteria</taxon>
        <taxon>Bacillati</taxon>
        <taxon>Bacillota</taxon>
        <taxon>Clostridia</taxon>
        <taxon>Thermoanaerobacterales</taxon>
        <taxon>Thermoanaerobacteraceae</taxon>
        <taxon>Thermoanaerobacter</taxon>
    </lineage>
</organism>
<keyword id="KW-0687">Ribonucleoprotein</keyword>
<keyword id="KW-0689">Ribosomal protein</keyword>
<keyword id="KW-0694">RNA-binding</keyword>
<keyword id="KW-0699">rRNA-binding</keyword>
<gene>
    <name evidence="1" type="primary">rpsK</name>
    <name type="ordered locus">Teth514_0893</name>
</gene>
<proteinExistence type="inferred from homology"/>
<reference key="1">
    <citation type="submission" date="2008-01" db="EMBL/GenBank/DDBJ databases">
        <title>Complete sequence of Thermoanaerobacter sp. X514.</title>
        <authorList>
            <consortium name="US DOE Joint Genome Institute"/>
            <person name="Copeland A."/>
            <person name="Lucas S."/>
            <person name="Lapidus A."/>
            <person name="Barry K."/>
            <person name="Glavina del Rio T."/>
            <person name="Dalin E."/>
            <person name="Tice H."/>
            <person name="Pitluck S."/>
            <person name="Bruce D."/>
            <person name="Goodwin L."/>
            <person name="Saunders E."/>
            <person name="Brettin T."/>
            <person name="Detter J.C."/>
            <person name="Han C."/>
            <person name="Schmutz J."/>
            <person name="Larimer F."/>
            <person name="Land M."/>
            <person name="Hauser L."/>
            <person name="Kyrpides N."/>
            <person name="Kim E."/>
            <person name="Hemme C."/>
            <person name="Fields M.W."/>
            <person name="He Z."/>
            <person name="Zhou J."/>
            <person name="Richardson P."/>
        </authorList>
    </citation>
    <scope>NUCLEOTIDE SEQUENCE [LARGE SCALE GENOMIC DNA]</scope>
    <source>
        <strain>X514</strain>
    </source>
</reference>
<comment type="function">
    <text evidence="1">Located on the platform of the 30S subunit, it bridges several disparate RNA helices of the 16S rRNA. Forms part of the Shine-Dalgarno cleft in the 70S ribosome.</text>
</comment>
<comment type="subunit">
    <text evidence="1">Part of the 30S ribosomal subunit. Interacts with proteins S7 and S18. Binds to IF-3.</text>
</comment>
<comment type="similarity">
    <text evidence="1">Belongs to the universal ribosomal protein uS11 family.</text>
</comment>
<feature type="chain" id="PRO_1000141152" description="Small ribosomal subunit protein uS11">
    <location>
        <begin position="1"/>
        <end position="130"/>
    </location>
</feature>
<sequence>MAKRVKRAGRKREKKHVERGIAHIHSTFNNTIVTITDPAGNTISWASAGTIGFKGSRKSTPFAAQMAAESAAKSAMEHGMKTVDVYVKGPGAGREAAIRALQAAGLEVSLIKDVTPIPHNGCRPPKRRRV</sequence>
<name>RS11_THEPX</name>
<evidence type="ECO:0000255" key="1">
    <source>
        <dbReference type="HAMAP-Rule" id="MF_01310"/>
    </source>
</evidence>
<evidence type="ECO:0000305" key="2"/>
<protein>
    <recommendedName>
        <fullName evidence="1">Small ribosomal subunit protein uS11</fullName>
    </recommendedName>
    <alternativeName>
        <fullName evidence="2">30S ribosomal protein S11</fullName>
    </alternativeName>
</protein>